<gene>
    <name evidence="1" type="primary">rplN</name>
    <name type="ordered locus">SPG_0205</name>
</gene>
<dbReference type="EMBL" id="CP001015">
    <property type="protein sequence ID" value="ACF56132.1"/>
    <property type="molecule type" value="Genomic_DNA"/>
</dbReference>
<dbReference type="SMR" id="B5E6G5"/>
<dbReference type="KEGG" id="spx:SPG_0205"/>
<dbReference type="HOGENOM" id="CLU_095071_2_1_9"/>
<dbReference type="GO" id="GO:0022625">
    <property type="term" value="C:cytosolic large ribosomal subunit"/>
    <property type="evidence" value="ECO:0007669"/>
    <property type="project" value="TreeGrafter"/>
</dbReference>
<dbReference type="GO" id="GO:0070180">
    <property type="term" value="F:large ribosomal subunit rRNA binding"/>
    <property type="evidence" value="ECO:0007669"/>
    <property type="project" value="TreeGrafter"/>
</dbReference>
<dbReference type="GO" id="GO:0003735">
    <property type="term" value="F:structural constituent of ribosome"/>
    <property type="evidence" value="ECO:0007669"/>
    <property type="project" value="InterPro"/>
</dbReference>
<dbReference type="GO" id="GO:0006412">
    <property type="term" value="P:translation"/>
    <property type="evidence" value="ECO:0007669"/>
    <property type="project" value="UniProtKB-UniRule"/>
</dbReference>
<dbReference type="CDD" id="cd00337">
    <property type="entry name" value="Ribosomal_uL14"/>
    <property type="match status" value="1"/>
</dbReference>
<dbReference type="FunFam" id="2.40.150.20:FF:000001">
    <property type="entry name" value="50S ribosomal protein L14"/>
    <property type="match status" value="1"/>
</dbReference>
<dbReference type="Gene3D" id="2.40.150.20">
    <property type="entry name" value="Ribosomal protein L14"/>
    <property type="match status" value="1"/>
</dbReference>
<dbReference type="HAMAP" id="MF_01367">
    <property type="entry name" value="Ribosomal_uL14"/>
    <property type="match status" value="1"/>
</dbReference>
<dbReference type="InterPro" id="IPR000218">
    <property type="entry name" value="Ribosomal_uL14"/>
</dbReference>
<dbReference type="InterPro" id="IPR005745">
    <property type="entry name" value="Ribosomal_uL14_bac-type"/>
</dbReference>
<dbReference type="InterPro" id="IPR019972">
    <property type="entry name" value="Ribosomal_uL14_CS"/>
</dbReference>
<dbReference type="InterPro" id="IPR036853">
    <property type="entry name" value="Ribosomal_uL14_sf"/>
</dbReference>
<dbReference type="NCBIfam" id="TIGR01067">
    <property type="entry name" value="rplN_bact"/>
    <property type="match status" value="1"/>
</dbReference>
<dbReference type="PANTHER" id="PTHR11761">
    <property type="entry name" value="50S/60S RIBOSOMAL PROTEIN L14/L23"/>
    <property type="match status" value="1"/>
</dbReference>
<dbReference type="PANTHER" id="PTHR11761:SF3">
    <property type="entry name" value="LARGE RIBOSOMAL SUBUNIT PROTEIN UL14M"/>
    <property type="match status" value="1"/>
</dbReference>
<dbReference type="Pfam" id="PF00238">
    <property type="entry name" value="Ribosomal_L14"/>
    <property type="match status" value="1"/>
</dbReference>
<dbReference type="SMART" id="SM01374">
    <property type="entry name" value="Ribosomal_L14"/>
    <property type="match status" value="1"/>
</dbReference>
<dbReference type="SUPFAM" id="SSF50193">
    <property type="entry name" value="Ribosomal protein L14"/>
    <property type="match status" value="1"/>
</dbReference>
<dbReference type="PROSITE" id="PS00049">
    <property type="entry name" value="RIBOSOMAL_L14"/>
    <property type="match status" value="1"/>
</dbReference>
<sequence length="122" mass="13006">MIQTETRLKVADNSGAREILTIKVLGGSGRKFANIGDVIVASVKQATPGGAVKKGDVVKAVIVRTKSGARRADGSYIKFDENAAVIIREDKTPRGTRIFGPVARELREGGFMKIVSLAPEVL</sequence>
<comment type="function">
    <text evidence="1">Binds to 23S rRNA. Forms part of two intersubunit bridges in the 70S ribosome.</text>
</comment>
<comment type="subunit">
    <text evidence="1">Part of the 50S ribosomal subunit. Forms a cluster with proteins L3 and L19. In the 70S ribosome, L14 and L19 interact and together make contacts with the 16S rRNA in bridges B5 and B8.</text>
</comment>
<comment type="similarity">
    <text evidence="1">Belongs to the universal ribosomal protein uL14 family.</text>
</comment>
<name>RL14_STRP4</name>
<accession>B5E6G5</accession>
<protein>
    <recommendedName>
        <fullName evidence="1">Large ribosomal subunit protein uL14</fullName>
    </recommendedName>
    <alternativeName>
        <fullName evidence="2">50S ribosomal protein L14</fullName>
    </alternativeName>
</protein>
<feature type="chain" id="PRO_1000144336" description="Large ribosomal subunit protein uL14">
    <location>
        <begin position="1"/>
        <end position="122"/>
    </location>
</feature>
<organism>
    <name type="scientific">Streptococcus pneumoniae serotype 19F (strain G54)</name>
    <dbReference type="NCBI Taxonomy" id="512566"/>
    <lineage>
        <taxon>Bacteria</taxon>
        <taxon>Bacillati</taxon>
        <taxon>Bacillota</taxon>
        <taxon>Bacilli</taxon>
        <taxon>Lactobacillales</taxon>
        <taxon>Streptococcaceae</taxon>
        <taxon>Streptococcus</taxon>
    </lineage>
</organism>
<evidence type="ECO:0000255" key="1">
    <source>
        <dbReference type="HAMAP-Rule" id="MF_01367"/>
    </source>
</evidence>
<evidence type="ECO:0000305" key="2"/>
<proteinExistence type="inferred from homology"/>
<keyword id="KW-0687">Ribonucleoprotein</keyword>
<keyword id="KW-0689">Ribosomal protein</keyword>
<keyword id="KW-0694">RNA-binding</keyword>
<keyword id="KW-0699">rRNA-binding</keyword>
<reference key="1">
    <citation type="journal article" date="2001" name="Microb. Drug Resist.">
        <title>Annotated draft genomic sequence from a Streptococcus pneumoniae type 19F clinical isolate.</title>
        <authorList>
            <person name="Dopazo J."/>
            <person name="Mendoza A."/>
            <person name="Herrero J."/>
            <person name="Caldara F."/>
            <person name="Humbert Y."/>
            <person name="Friedli L."/>
            <person name="Guerrier M."/>
            <person name="Grand-Schenk E."/>
            <person name="Gandin C."/>
            <person name="de Francesco M."/>
            <person name="Polissi A."/>
            <person name="Buell G."/>
            <person name="Feger G."/>
            <person name="Garcia E."/>
            <person name="Peitsch M."/>
            <person name="Garcia-Bustos J.F."/>
        </authorList>
    </citation>
    <scope>NUCLEOTIDE SEQUENCE [LARGE SCALE GENOMIC DNA]</scope>
    <source>
        <strain>G54</strain>
    </source>
</reference>
<reference key="2">
    <citation type="submission" date="2008-03" db="EMBL/GenBank/DDBJ databases">
        <title>Pneumococcal beta glucoside metabolism investigated by whole genome comparison.</title>
        <authorList>
            <person name="Mulas L."/>
            <person name="Trappetti C."/>
            <person name="Hakenbeck R."/>
            <person name="Iannelli F."/>
            <person name="Pozzi G."/>
            <person name="Davidsen T.M."/>
            <person name="Tettelin H."/>
            <person name="Oggioni M."/>
        </authorList>
    </citation>
    <scope>NUCLEOTIDE SEQUENCE [LARGE SCALE GENOMIC DNA]</scope>
    <source>
        <strain>G54</strain>
    </source>
</reference>